<feature type="chain" id="PRO_0000220353" description="UPF0355 protein SSP2326">
    <location>
        <begin position="1"/>
        <end position="138"/>
    </location>
</feature>
<feature type="region of interest" description="Disordered" evidence="1">
    <location>
        <begin position="115"/>
        <end position="138"/>
    </location>
</feature>
<feature type="compositionally biased region" description="Polar residues" evidence="1">
    <location>
        <begin position="118"/>
        <end position="138"/>
    </location>
</feature>
<sequence length="138" mass="15415">MSEFTIVQNKEDLIDAIKSKLSEGYKESEMTVISKTKLHIDALHDSEVNLTATSGSFSDKMAKILTGEDGEEAVLAHYKLPEEELERYKKEILNDNYLVVATKDTTSHVEADKANVAFETNQTKSNSHYSEETNGPKS</sequence>
<comment type="similarity">
    <text evidence="2">Belongs to the UPF0355 family.</text>
</comment>
<name>UP355_STAS1</name>
<dbReference type="EMBL" id="AP008934">
    <property type="protein sequence ID" value="BAE19471.1"/>
    <property type="molecule type" value="Genomic_DNA"/>
</dbReference>
<dbReference type="RefSeq" id="WP_011303924.1">
    <property type="nucleotide sequence ID" value="NZ_MTGA01000035.1"/>
</dbReference>
<dbReference type="GeneID" id="3616572"/>
<dbReference type="KEGG" id="ssp:SSP2326"/>
<dbReference type="PATRIC" id="fig|342451.11.peg.2315"/>
<dbReference type="eggNOG" id="ENOG50334EH">
    <property type="taxonomic scope" value="Bacteria"/>
</dbReference>
<dbReference type="HOGENOM" id="CLU_152601_0_0_9"/>
<dbReference type="OrthoDB" id="2409186at2"/>
<dbReference type="Proteomes" id="UP000006371">
    <property type="component" value="Chromosome"/>
</dbReference>
<dbReference type="InterPro" id="IPR025889">
    <property type="entry name" value="GSP17M-like_dom"/>
</dbReference>
<dbReference type="Pfam" id="PF11181">
    <property type="entry name" value="YflT"/>
    <property type="match status" value="1"/>
</dbReference>
<reference key="1">
    <citation type="journal article" date="2005" name="Proc. Natl. Acad. Sci. U.S.A.">
        <title>Whole genome sequence of Staphylococcus saprophyticus reveals the pathogenesis of uncomplicated urinary tract infection.</title>
        <authorList>
            <person name="Kuroda M."/>
            <person name="Yamashita A."/>
            <person name="Hirakawa H."/>
            <person name="Kumano M."/>
            <person name="Morikawa K."/>
            <person name="Higashide M."/>
            <person name="Maruyama A."/>
            <person name="Inose Y."/>
            <person name="Matoba K."/>
            <person name="Toh H."/>
            <person name="Kuhara S."/>
            <person name="Hattori M."/>
            <person name="Ohta T."/>
        </authorList>
    </citation>
    <scope>NUCLEOTIDE SEQUENCE [LARGE SCALE GENOMIC DNA]</scope>
    <source>
        <strain>ATCC 15305 / DSM 20229 / NCIMB 8711 / NCTC 7292 / S-41</strain>
    </source>
</reference>
<keyword id="KW-1185">Reference proteome</keyword>
<protein>
    <recommendedName>
        <fullName>UPF0355 protein SSP2326</fullName>
    </recommendedName>
</protein>
<gene>
    <name type="ordered locus">SSP2326</name>
</gene>
<proteinExistence type="inferred from homology"/>
<evidence type="ECO:0000256" key="1">
    <source>
        <dbReference type="SAM" id="MobiDB-lite"/>
    </source>
</evidence>
<evidence type="ECO:0000305" key="2"/>
<accession>Q49UU5</accession>
<organism>
    <name type="scientific">Staphylococcus saprophyticus subsp. saprophyticus (strain ATCC 15305 / DSM 20229 / NCIMB 8711 / NCTC 7292 / S-41)</name>
    <dbReference type="NCBI Taxonomy" id="342451"/>
    <lineage>
        <taxon>Bacteria</taxon>
        <taxon>Bacillati</taxon>
        <taxon>Bacillota</taxon>
        <taxon>Bacilli</taxon>
        <taxon>Bacillales</taxon>
        <taxon>Staphylococcaceae</taxon>
        <taxon>Staphylococcus</taxon>
    </lineage>
</organism>